<gene>
    <name evidence="1" type="primary">rpsC</name>
    <name type="ordered locus">SACE_6830</name>
</gene>
<reference key="1">
    <citation type="journal article" date="2007" name="Nat. Biotechnol.">
        <title>Complete genome sequence of the erythromycin-producing bacterium Saccharopolyspora erythraea NRRL23338.</title>
        <authorList>
            <person name="Oliynyk M."/>
            <person name="Samborskyy M."/>
            <person name="Lester J.B."/>
            <person name="Mironenko T."/>
            <person name="Scott N."/>
            <person name="Dickens S."/>
            <person name="Haydock S.F."/>
            <person name="Leadlay P.F."/>
        </authorList>
    </citation>
    <scope>NUCLEOTIDE SEQUENCE [LARGE SCALE GENOMIC DNA]</scope>
    <source>
        <strain>ATCC 11635 / DSM 40517 / JCM 4748 / NBRC 13426 / NCIMB 8594 / NRRL 2338</strain>
    </source>
</reference>
<name>RS3_SACEN</name>
<evidence type="ECO:0000255" key="1">
    <source>
        <dbReference type="HAMAP-Rule" id="MF_01309"/>
    </source>
</evidence>
<evidence type="ECO:0000256" key="2">
    <source>
        <dbReference type="SAM" id="MobiDB-lite"/>
    </source>
</evidence>
<evidence type="ECO:0000305" key="3"/>
<feature type="chain" id="PRO_0000293876" description="Small ribosomal subunit protein uS3">
    <location>
        <begin position="1"/>
        <end position="298"/>
    </location>
</feature>
<feature type="domain" description="KH type-2" evidence="1">
    <location>
        <begin position="38"/>
        <end position="106"/>
    </location>
</feature>
<feature type="region of interest" description="Disordered" evidence="2">
    <location>
        <begin position="212"/>
        <end position="298"/>
    </location>
</feature>
<feature type="compositionally biased region" description="Basic and acidic residues" evidence="2">
    <location>
        <begin position="214"/>
        <end position="237"/>
    </location>
</feature>
<feature type="compositionally biased region" description="Polar residues" evidence="2">
    <location>
        <begin position="265"/>
        <end position="278"/>
    </location>
</feature>
<organism>
    <name type="scientific">Saccharopolyspora erythraea (strain ATCC 11635 / DSM 40517 / JCM 4748 / NBRC 13426 / NCIMB 8594 / NRRL 2338)</name>
    <dbReference type="NCBI Taxonomy" id="405948"/>
    <lineage>
        <taxon>Bacteria</taxon>
        <taxon>Bacillati</taxon>
        <taxon>Actinomycetota</taxon>
        <taxon>Actinomycetes</taxon>
        <taxon>Pseudonocardiales</taxon>
        <taxon>Pseudonocardiaceae</taxon>
        <taxon>Saccharopolyspora</taxon>
    </lineage>
</organism>
<protein>
    <recommendedName>
        <fullName evidence="1">Small ribosomal subunit protein uS3</fullName>
    </recommendedName>
    <alternativeName>
        <fullName evidence="3">30S ribosomal protein S3</fullName>
    </alternativeName>
</protein>
<dbReference type="EMBL" id="AM420293">
    <property type="protein sequence ID" value="CAM05994.1"/>
    <property type="molecule type" value="Genomic_DNA"/>
</dbReference>
<dbReference type="RefSeq" id="WP_009948634.1">
    <property type="nucleotide sequence ID" value="NC_009142.1"/>
</dbReference>
<dbReference type="SMR" id="A4FPL9"/>
<dbReference type="STRING" id="405948.SACE_6830"/>
<dbReference type="KEGG" id="sen:SACE_6830"/>
<dbReference type="eggNOG" id="COG0092">
    <property type="taxonomic scope" value="Bacteria"/>
</dbReference>
<dbReference type="HOGENOM" id="CLU_058591_0_0_11"/>
<dbReference type="OrthoDB" id="9806396at2"/>
<dbReference type="Proteomes" id="UP000006728">
    <property type="component" value="Chromosome"/>
</dbReference>
<dbReference type="GO" id="GO:0022627">
    <property type="term" value="C:cytosolic small ribosomal subunit"/>
    <property type="evidence" value="ECO:0007669"/>
    <property type="project" value="TreeGrafter"/>
</dbReference>
<dbReference type="GO" id="GO:0003729">
    <property type="term" value="F:mRNA binding"/>
    <property type="evidence" value="ECO:0007669"/>
    <property type="project" value="UniProtKB-UniRule"/>
</dbReference>
<dbReference type="GO" id="GO:0019843">
    <property type="term" value="F:rRNA binding"/>
    <property type="evidence" value="ECO:0007669"/>
    <property type="project" value="UniProtKB-UniRule"/>
</dbReference>
<dbReference type="GO" id="GO:0003735">
    <property type="term" value="F:structural constituent of ribosome"/>
    <property type="evidence" value="ECO:0007669"/>
    <property type="project" value="InterPro"/>
</dbReference>
<dbReference type="GO" id="GO:0006412">
    <property type="term" value="P:translation"/>
    <property type="evidence" value="ECO:0007669"/>
    <property type="project" value="UniProtKB-UniRule"/>
</dbReference>
<dbReference type="CDD" id="cd02412">
    <property type="entry name" value="KH-II_30S_S3"/>
    <property type="match status" value="1"/>
</dbReference>
<dbReference type="FunFam" id="3.30.1140.32:FF:000002">
    <property type="entry name" value="30S ribosomal protein S3"/>
    <property type="match status" value="1"/>
</dbReference>
<dbReference type="FunFam" id="3.30.300.20:FF:000001">
    <property type="entry name" value="30S ribosomal protein S3"/>
    <property type="match status" value="1"/>
</dbReference>
<dbReference type="Gene3D" id="3.30.300.20">
    <property type="match status" value="1"/>
</dbReference>
<dbReference type="Gene3D" id="3.30.1140.32">
    <property type="entry name" value="Ribosomal protein S3, C-terminal domain"/>
    <property type="match status" value="1"/>
</dbReference>
<dbReference type="HAMAP" id="MF_01309_B">
    <property type="entry name" value="Ribosomal_uS3_B"/>
    <property type="match status" value="1"/>
</dbReference>
<dbReference type="InterPro" id="IPR004087">
    <property type="entry name" value="KH_dom"/>
</dbReference>
<dbReference type="InterPro" id="IPR015946">
    <property type="entry name" value="KH_dom-like_a/b"/>
</dbReference>
<dbReference type="InterPro" id="IPR004044">
    <property type="entry name" value="KH_dom_type_2"/>
</dbReference>
<dbReference type="InterPro" id="IPR009019">
    <property type="entry name" value="KH_sf_prok-type"/>
</dbReference>
<dbReference type="InterPro" id="IPR036419">
    <property type="entry name" value="Ribosomal_S3_C_sf"/>
</dbReference>
<dbReference type="InterPro" id="IPR005704">
    <property type="entry name" value="Ribosomal_uS3_bac-typ"/>
</dbReference>
<dbReference type="InterPro" id="IPR001351">
    <property type="entry name" value="Ribosomal_uS3_C"/>
</dbReference>
<dbReference type="InterPro" id="IPR018280">
    <property type="entry name" value="Ribosomal_uS3_CS"/>
</dbReference>
<dbReference type="NCBIfam" id="TIGR01009">
    <property type="entry name" value="rpsC_bact"/>
    <property type="match status" value="1"/>
</dbReference>
<dbReference type="PANTHER" id="PTHR11760">
    <property type="entry name" value="30S/40S RIBOSOMAL PROTEIN S3"/>
    <property type="match status" value="1"/>
</dbReference>
<dbReference type="PANTHER" id="PTHR11760:SF19">
    <property type="entry name" value="SMALL RIBOSOMAL SUBUNIT PROTEIN US3C"/>
    <property type="match status" value="1"/>
</dbReference>
<dbReference type="Pfam" id="PF07650">
    <property type="entry name" value="KH_2"/>
    <property type="match status" value="1"/>
</dbReference>
<dbReference type="Pfam" id="PF00189">
    <property type="entry name" value="Ribosomal_S3_C"/>
    <property type="match status" value="1"/>
</dbReference>
<dbReference type="SMART" id="SM00322">
    <property type="entry name" value="KH"/>
    <property type="match status" value="1"/>
</dbReference>
<dbReference type="SUPFAM" id="SSF54814">
    <property type="entry name" value="Prokaryotic type KH domain (KH-domain type II)"/>
    <property type="match status" value="1"/>
</dbReference>
<dbReference type="SUPFAM" id="SSF54821">
    <property type="entry name" value="Ribosomal protein S3 C-terminal domain"/>
    <property type="match status" value="1"/>
</dbReference>
<dbReference type="PROSITE" id="PS50823">
    <property type="entry name" value="KH_TYPE_2"/>
    <property type="match status" value="1"/>
</dbReference>
<dbReference type="PROSITE" id="PS00548">
    <property type="entry name" value="RIBOSOMAL_S3"/>
    <property type="match status" value="1"/>
</dbReference>
<accession>A4FPL9</accession>
<proteinExistence type="inferred from homology"/>
<keyword id="KW-1185">Reference proteome</keyword>
<keyword id="KW-0687">Ribonucleoprotein</keyword>
<keyword id="KW-0689">Ribosomal protein</keyword>
<keyword id="KW-0694">RNA-binding</keyword>
<keyword id="KW-0699">rRNA-binding</keyword>
<sequence length="298" mass="32815">MGQKINPHGFRLGITTDWKSRWYADKQYSEYVAEDVKIRRRLSRGMERAGISKVEIERTRERVRVDIHTARPGIVIGRRGAEADRIRGSLEKLTGKQVQLNILEVKNAEADAQLVAQGVAEQLSNRVSFRRAMRKAIQSAMRSPQVKGIRVQCGGRLGGAEMSRSEFYREGRVPLHTLRADIDYGFFEARTTFGRIGVKVWIYKGELVGGLKQKQQESEVRPPRGERGERGGRPERGGRRRSGASGTTGSGGTEAGRAAADKSKGSAQSPEQAQTSGDVASANAPQVAEPRADEKTEG</sequence>
<comment type="function">
    <text evidence="1">Binds the lower part of the 30S subunit head. Binds mRNA in the 70S ribosome, positioning it for translation.</text>
</comment>
<comment type="subunit">
    <text evidence="1">Part of the 30S ribosomal subunit. Forms a tight complex with proteins S10 and S14.</text>
</comment>
<comment type="similarity">
    <text evidence="1">Belongs to the universal ribosomal protein uS3 family.</text>
</comment>